<comment type="similarity">
    <text evidence="1">Belongs to the eukaryotic ribosomal protein eL15 family.</text>
</comment>
<sequence>MSKSMYHYIAEAWKEKSRELEALIRQRLIEWRREPSVVRLEKPTRLDKARALGYKAKVGFIIVRVRVRKGGQRKPRPDSGRRPKRMGVYGYAPAKSLRLIAEERAARKFPGLEVLNSYYVAEDGRYKWYEVILVDPHHPSICNDPDVNWICEPQNRGRVFRGLTSAGKKMRGLRKSRGLRGTVYYKWKRKLKERELKKRHEASRGARDPWQIAEKLKEEK</sequence>
<organism>
    <name type="scientific">Desulfurococcus amylolyticus (strain DSM 18924 / JCM 16383 / VKM B-2413 / 1221n)</name>
    <name type="common">Desulfurococcus kamchatkensis</name>
    <dbReference type="NCBI Taxonomy" id="490899"/>
    <lineage>
        <taxon>Archaea</taxon>
        <taxon>Thermoproteota</taxon>
        <taxon>Thermoprotei</taxon>
        <taxon>Desulfurococcales</taxon>
        <taxon>Desulfurococcaceae</taxon>
        <taxon>Desulfurococcus</taxon>
    </lineage>
</organism>
<name>RL15E_DESA1</name>
<proteinExistence type="inferred from homology"/>
<keyword id="KW-0687">Ribonucleoprotein</keyword>
<keyword id="KW-0689">Ribosomal protein</keyword>
<dbReference type="EMBL" id="CP001140">
    <property type="protein sequence ID" value="ACL11657.1"/>
    <property type="molecule type" value="Genomic_DNA"/>
</dbReference>
<dbReference type="RefSeq" id="WP_012608998.1">
    <property type="nucleotide sequence ID" value="NC_011766.1"/>
</dbReference>
<dbReference type="SMR" id="B8D6C6"/>
<dbReference type="STRING" id="490899.DKAM_1331"/>
<dbReference type="GeneID" id="7171382"/>
<dbReference type="KEGG" id="dka:DKAM_1331"/>
<dbReference type="eggNOG" id="arCOG04209">
    <property type="taxonomic scope" value="Archaea"/>
</dbReference>
<dbReference type="HOGENOM" id="CLU_080796_1_0_2"/>
<dbReference type="Proteomes" id="UP000006903">
    <property type="component" value="Chromosome"/>
</dbReference>
<dbReference type="GO" id="GO:0022625">
    <property type="term" value="C:cytosolic large ribosomal subunit"/>
    <property type="evidence" value="ECO:0007669"/>
    <property type="project" value="TreeGrafter"/>
</dbReference>
<dbReference type="GO" id="GO:0003723">
    <property type="term" value="F:RNA binding"/>
    <property type="evidence" value="ECO:0007669"/>
    <property type="project" value="TreeGrafter"/>
</dbReference>
<dbReference type="GO" id="GO:0003735">
    <property type="term" value="F:structural constituent of ribosome"/>
    <property type="evidence" value="ECO:0007669"/>
    <property type="project" value="InterPro"/>
</dbReference>
<dbReference type="GO" id="GO:0002181">
    <property type="term" value="P:cytoplasmic translation"/>
    <property type="evidence" value="ECO:0007669"/>
    <property type="project" value="TreeGrafter"/>
</dbReference>
<dbReference type="FunFam" id="3.40.1120.10:FF:000002">
    <property type="entry name" value="50S ribosomal protein L15e"/>
    <property type="match status" value="1"/>
</dbReference>
<dbReference type="Gene3D" id="3.40.1120.10">
    <property type="entry name" value="Ribosomal protein l15e"/>
    <property type="match status" value="1"/>
</dbReference>
<dbReference type="HAMAP" id="MF_00256">
    <property type="entry name" value="Ribosomal_eL15"/>
    <property type="match status" value="1"/>
</dbReference>
<dbReference type="InterPro" id="IPR024794">
    <property type="entry name" value="Rbsml_eL15_core_dom_sf"/>
</dbReference>
<dbReference type="InterPro" id="IPR000439">
    <property type="entry name" value="Ribosomal_eL15"/>
</dbReference>
<dbReference type="InterPro" id="IPR020926">
    <property type="entry name" value="Ribosomal_eL15_arc"/>
</dbReference>
<dbReference type="InterPro" id="IPR020925">
    <property type="entry name" value="Ribosomal_eL15_CS"/>
</dbReference>
<dbReference type="InterPro" id="IPR012678">
    <property type="entry name" value="Ribosomal_uL23/eL15/eS24_sf"/>
</dbReference>
<dbReference type="NCBIfam" id="NF003269">
    <property type="entry name" value="PRK04243.1"/>
    <property type="match status" value="1"/>
</dbReference>
<dbReference type="PANTHER" id="PTHR11847:SF4">
    <property type="entry name" value="LARGE RIBOSOMAL SUBUNIT PROTEIN EL15"/>
    <property type="match status" value="1"/>
</dbReference>
<dbReference type="PANTHER" id="PTHR11847">
    <property type="entry name" value="RIBOSOMAL PROTEIN L15"/>
    <property type="match status" value="1"/>
</dbReference>
<dbReference type="Pfam" id="PF00827">
    <property type="entry name" value="Ribosomal_L15e"/>
    <property type="match status" value="1"/>
</dbReference>
<dbReference type="SMART" id="SM01384">
    <property type="entry name" value="Ribosomal_L15e"/>
    <property type="match status" value="1"/>
</dbReference>
<dbReference type="SUPFAM" id="SSF54189">
    <property type="entry name" value="Ribosomal proteins S24e, L23 and L15e"/>
    <property type="match status" value="1"/>
</dbReference>
<dbReference type="PROSITE" id="PS01194">
    <property type="entry name" value="RIBOSOMAL_L15E"/>
    <property type="match status" value="1"/>
</dbReference>
<evidence type="ECO:0000255" key="1">
    <source>
        <dbReference type="HAMAP-Rule" id="MF_00256"/>
    </source>
</evidence>
<evidence type="ECO:0000256" key="2">
    <source>
        <dbReference type="SAM" id="MobiDB-lite"/>
    </source>
</evidence>
<evidence type="ECO:0000305" key="3"/>
<accession>B8D6C6</accession>
<feature type="chain" id="PRO_1000125598" description="Large ribosomal subunit protein eL15">
    <location>
        <begin position="1"/>
        <end position="220"/>
    </location>
</feature>
<feature type="region of interest" description="Disordered" evidence="2">
    <location>
        <begin position="197"/>
        <end position="220"/>
    </location>
</feature>
<feature type="compositionally biased region" description="Basic and acidic residues" evidence="2">
    <location>
        <begin position="197"/>
        <end position="207"/>
    </location>
</feature>
<protein>
    <recommendedName>
        <fullName evidence="1">Large ribosomal subunit protein eL15</fullName>
    </recommendedName>
    <alternativeName>
        <fullName evidence="3">50S ribosomal protein L15e</fullName>
    </alternativeName>
</protein>
<gene>
    <name evidence="1" type="primary">rpl15e</name>
    <name type="ordered locus">DKAM_1331</name>
</gene>
<reference key="1">
    <citation type="journal article" date="2009" name="J. Bacteriol.">
        <title>Complete genome sequence of the anaerobic, protein-degrading hyperthermophilic crenarchaeon Desulfurococcus kamchatkensis.</title>
        <authorList>
            <person name="Ravin N.V."/>
            <person name="Mardanov A.V."/>
            <person name="Beletsky A.V."/>
            <person name="Kublanov I.V."/>
            <person name="Kolganova T.V."/>
            <person name="Lebedinsky A.V."/>
            <person name="Chernyh N.A."/>
            <person name="Bonch-Osmolovskaya E.A."/>
            <person name="Skryabin K.G."/>
        </authorList>
    </citation>
    <scope>NUCLEOTIDE SEQUENCE [LARGE SCALE GENOMIC DNA]</scope>
    <source>
        <strain>DSM 18924 / JCM 16383 / VKM B-2413 / 1221n</strain>
    </source>
</reference>